<reference key="1">
    <citation type="journal article" date="2002" name="DNA Res.">
        <title>Complete genome structure of the thermophilic cyanobacterium Thermosynechococcus elongatus BP-1.</title>
        <authorList>
            <person name="Nakamura Y."/>
            <person name="Kaneko T."/>
            <person name="Sato S."/>
            <person name="Ikeuchi M."/>
            <person name="Katoh H."/>
            <person name="Sasamoto S."/>
            <person name="Watanabe A."/>
            <person name="Iriguchi M."/>
            <person name="Kawashima K."/>
            <person name="Kimura T."/>
            <person name="Kishida Y."/>
            <person name="Kiyokawa C."/>
            <person name="Kohara M."/>
            <person name="Matsumoto M."/>
            <person name="Matsuno A."/>
            <person name="Nakazaki N."/>
            <person name="Shimpo S."/>
            <person name="Sugimoto M."/>
            <person name="Takeuchi C."/>
            <person name="Yamada M."/>
            <person name="Tabata S."/>
        </authorList>
    </citation>
    <scope>NUCLEOTIDE SEQUENCE [LARGE SCALE GENOMIC DNA]</scope>
    <source>
        <strain>NIES-2133 / IAM M-273 / BP-1</strain>
    </source>
</reference>
<organism>
    <name type="scientific">Thermosynechococcus vestitus (strain NIES-2133 / IAM M-273 / BP-1)</name>
    <dbReference type="NCBI Taxonomy" id="197221"/>
    <lineage>
        <taxon>Bacteria</taxon>
        <taxon>Bacillati</taxon>
        <taxon>Cyanobacteriota</taxon>
        <taxon>Cyanophyceae</taxon>
        <taxon>Acaryochloridales</taxon>
        <taxon>Thermosynechococcaceae</taxon>
        <taxon>Thermosynechococcus</taxon>
    </lineage>
</organism>
<gene>
    <name evidence="1" type="primary">murQ</name>
    <name type="ordered locus">tlr1171</name>
</gene>
<proteinExistence type="inferred from homology"/>
<accession>Q8DJQ1</accession>
<comment type="function">
    <text evidence="1">Specifically catalyzes the cleavage of the D-lactyl ether substituent of MurNAc 6-phosphate, producing GlcNAc 6-phosphate and D-lactate.</text>
</comment>
<comment type="catalytic activity">
    <reaction evidence="1">
        <text>N-acetyl-D-muramate 6-phosphate + H2O = N-acetyl-D-glucosamine 6-phosphate + (R)-lactate</text>
        <dbReference type="Rhea" id="RHEA:26410"/>
        <dbReference type="ChEBI" id="CHEBI:15377"/>
        <dbReference type="ChEBI" id="CHEBI:16004"/>
        <dbReference type="ChEBI" id="CHEBI:57513"/>
        <dbReference type="ChEBI" id="CHEBI:58722"/>
        <dbReference type="EC" id="4.2.1.126"/>
    </reaction>
</comment>
<comment type="pathway">
    <text evidence="1">Amino-sugar metabolism; N-acetylmuramate degradation.</text>
</comment>
<comment type="subunit">
    <text evidence="1">Homodimer.</text>
</comment>
<comment type="miscellaneous">
    <text evidence="1">A lyase-type mechanism (elimination/hydration) is suggested for the cleavage of the lactyl ether bond of MurNAc 6-phosphate, with the formation of an alpha,beta-unsaturated aldehyde intermediate with (E)-stereochemistry, followed by the syn addition of water to give product.</text>
</comment>
<comment type="similarity">
    <text evidence="1">Belongs to the GCKR-like family. MurNAc-6-P etherase subfamily.</text>
</comment>
<name>MURQ_THEVB</name>
<evidence type="ECO:0000255" key="1">
    <source>
        <dbReference type="HAMAP-Rule" id="MF_00068"/>
    </source>
</evidence>
<sequence>MTNLQELPSRGHLLTEQINPASQNLDQLTPLELVDLFNQEDAHTLRAIAQAREALAQTISATAARLRQGGRLFYIGAGTSGRLGVLDAAECPPTFCTPPHLVQGILAGGDAALVRSSEGLEDRYEDGAAVVGDRQITAQDVVIGISAGGTTPYVHGALDAAQGVGALTVFMACVPVEQVQRSADIDIRLLVGPELLAGSTRLKAGTATKMALNIISTGVMVQLGKVYGNRMVDVAVSNRKLLDRALRILTDVTGMDRAAAAALLERSGYQVKRALLMHWTGLDAPAAQALLDQQNGQLHAARSAALDP</sequence>
<dbReference type="EC" id="4.2.1.126" evidence="1"/>
<dbReference type="EMBL" id="BA000039">
    <property type="protein sequence ID" value="BAC08723.1"/>
    <property type="molecule type" value="Genomic_DNA"/>
</dbReference>
<dbReference type="RefSeq" id="NP_681961.1">
    <property type="nucleotide sequence ID" value="NC_004113.1"/>
</dbReference>
<dbReference type="RefSeq" id="WP_011057013.1">
    <property type="nucleotide sequence ID" value="NC_004113.1"/>
</dbReference>
<dbReference type="SMR" id="Q8DJQ1"/>
<dbReference type="STRING" id="197221.gene:10747766"/>
<dbReference type="EnsemblBacteria" id="BAC08723">
    <property type="protein sequence ID" value="BAC08723"/>
    <property type="gene ID" value="BAC08723"/>
</dbReference>
<dbReference type="KEGG" id="tel:tlr1171"/>
<dbReference type="PATRIC" id="fig|197221.4.peg.1231"/>
<dbReference type="eggNOG" id="COG2103">
    <property type="taxonomic scope" value="Bacteria"/>
</dbReference>
<dbReference type="UniPathway" id="UPA00342"/>
<dbReference type="Proteomes" id="UP000000440">
    <property type="component" value="Chromosome"/>
</dbReference>
<dbReference type="GO" id="GO:0097367">
    <property type="term" value="F:carbohydrate derivative binding"/>
    <property type="evidence" value="ECO:0007669"/>
    <property type="project" value="InterPro"/>
</dbReference>
<dbReference type="GO" id="GO:0016835">
    <property type="term" value="F:carbon-oxygen lyase activity"/>
    <property type="evidence" value="ECO:0007669"/>
    <property type="project" value="UniProtKB-UniRule"/>
</dbReference>
<dbReference type="GO" id="GO:0016803">
    <property type="term" value="F:ether hydrolase activity"/>
    <property type="evidence" value="ECO:0007669"/>
    <property type="project" value="TreeGrafter"/>
</dbReference>
<dbReference type="GO" id="GO:0046348">
    <property type="term" value="P:amino sugar catabolic process"/>
    <property type="evidence" value="ECO:0007669"/>
    <property type="project" value="InterPro"/>
</dbReference>
<dbReference type="GO" id="GO:0097173">
    <property type="term" value="P:N-acetylmuramic acid catabolic process"/>
    <property type="evidence" value="ECO:0007669"/>
    <property type="project" value="UniProtKB-UniPathway"/>
</dbReference>
<dbReference type="GO" id="GO:0009254">
    <property type="term" value="P:peptidoglycan turnover"/>
    <property type="evidence" value="ECO:0007669"/>
    <property type="project" value="TreeGrafter"/>
</dbReference>
<dbReference type="CDD" id="cd05007">
    <property type="entry name" value="SIS_Etherase"/>
    <property type="match status" value="1"/>
</dbReference>
<dbReference type="FunFam" id="3.40.50.10490:FF:000014">
    <property type="entry name" value="N-acetylmuramic acid 6-phosphate etherase"/>
    <property type="match status" value="1"/>
</dbReference>
<dbReference type="Gene3D" id="1.10.8.1080">
    <property type="match status" value="1"/>
</dbReference>
<dbReference type="Gene3D" id="3.40.50.10490">
    <property type="entry name" value="Glucose-6-phosphate isomerase like protein, domain 1"/>
    <property type="match status" value="2"/>
</dbReference>
<dbReference type="HAMAP" id="MF_00068">
    <property type="entry name" value="MurQ"/>
    <property type="match status" value="1"/>
</dbReference>
<dbReference type="InterPro" id="IPR005488">
    <property type="entry name" value="Etherase_MurQ"/>
</dbReference>
<dbReference type="InterPro" id="IPR005486">
    <property type="entry name" value="Glucokinase_regulatory_CS"/>
</dbReference>
<dbReference type="InterPro" id="IPR040190">
    <property type="entry name" value="MURQ/GCKR"/>
</dbReference>
<dbReference type="InterPro" id="IPR001347">
    <property type="entry name" value="SIS_dom"/>
</dbReference>
<dbReference type="InterPro" id="IPR046348">
    <property type="entry name" value="SIS_dom_sf"/>
</dbReference>
<dbReference type="NCBIfam" id="TIGR00274">
    <property type="entry name" value="N-acetylmuramic acid 6-phosphate etherase"/>
    <property type="match status" value="1"/>
</dbReference>
<dbReference type="NCBIfam" id="NF003915">
    <property type="entry name" value="PRK05441.1"/>
    <property type="match status" value="1"/>
</dbReference>
<dbReference type="NCBIfam" id="NF009222">
    <property type="entry name" value="PRK12570.1"/>
    <property type="match status" value="1"/>
</dbReference>
<dbReference type="PANTHER" id="PTHR10088">
    <property type="entry name" value="GLUCOKINASE REGULATORY PROTEIN"/>
    <property type="match status" value="1"/>
</dbReference>
<dbReference type="PANTHER" id="PTHR10088:SF4">
    <property type="entry name" value="GLUCOKINASE REGULATORY PROTEIN"/>
    <property type="match status" value="1"/>
</dbReference>
<dbReference type="Pfam" id="PF20741">
    <property type="entry name" value="GKRP-like_C"/>
    <property type="match status" value="1"/>
</dbReference>
<dbReference type="Pfam" id="PF22645">
    <property type="entry name" value="GKRP_SIS_N"/>
    <property type="match status" value="1"/>
</dbReference>
<dbReference type="SUPFAM" id="SSF53697">
    <property type="entry name" value="SIS domain"/>
    <property type="match status" value="1"/>
</dbReference>
<dbReference type="PROSITE" id="PS01272">
    <property type="entry name" value="GCKR"/>
    <property type="match status" value="1"/>
</dbReference>
<dbReference type="PROSITE" id="PS51464">
    <property type="entry name" value="SIS"/>
    <property type="match status" value="1"/>
</dbReference>
<keyword id="KW-0119">Carbohydrate metabolism</keyword>
<keyword id="KW-0456">Lyase</keyword>
<keyword id="KW-1185">Reference proteome</keyword>
<feature type="chain" id="PRO_0000249669" description="N-acetylmuramic acid 6-phosphate etherase">
    <location>
        <begin position="1"/>
        <end position="308"/>
    </location>
</feature>
<feature type="domain" description="SIS" evidence="1">
    <location>
        <begin position="62"/>
        <end position="225"/>
    </location>
</feature>
<feature type="active site" description="Proton donor" evidence="1">
    <location>
        <position position="90"/>
    </location>
</feature>
<feature type="active site" evidence="1">
    <location>
        <position position="121"/>
    </location>
</feature>
<protein>
    <recommendedName>
        <fullName evidence="1">N-acetylmuramic acid 6-phosphate etherase</fullName>
        <shortName evidence="1">MurNAc-6-P etherase</shortName>
        <ecNumber evidence="1">4.2.1.126</ecNumber>
    </recommendedName>
    <alternativeName>
        <fullName evidence="1">N-acetylmuramic acid 6-phosphate hydrolase</fullName>
    </alternativeName>
    <alternativeName>
        <fullName evidence="1">N-acetylmuramic acid 6-phosphate lyase</fullName>
    </alternativeName>
</protein>